<proteinExistence type="inferred from homology"/>
<evidence type="ECO:0000255" key="1">
    <source>
        <dbReference type="HAMAP-Rule" id="MF_00568"/>
    </source>
</evidence>
<gene>
    <name evidence="1" type="primary">nadA2</name>
    <name type="ordered locus">mll9104</name>
</gene>
<sequence length="324" mass="35632">MSTIQPSAAFLYDRVQRLIPPIEWPAFAGDIDAILDLKRQRNAVILAHNYQTPEIFHCVADIVGDSLALARKAMSTEADVIVLAGVHFMAETAKLLNPQKTVLIPDLRAGCSLADSITAEDIRLLRQRYPGVPVVTYVNTSAEVKAESDICCTSGNAKAIVESLGVPRVIMLPDEYLAENIAAQTDVEIIAWKGHCEVHERFTPADIRQLRENHPGVIVLAHPECPPDVVAEADFSGSTAAMSDYVERQKPPRVVLLTECSMSDNVALQHPELEFIRPCNLCPHMKRITLANIRSALEQNRHVVTIEPGIAGRARLAVERMLAV</sequence>
<accession>Q982F2</accession>
<geneLocation type="plasmid">
    <name>pMLa</name>
</geneLocation>
<dbReference type="EC" id="2.5.1.72" evidence="1"/>
<dbReference type="EMBL" id="BA000013">
    <property type="protein sequence ID" value="BAB54507.1"/>
    <property type="molecule type" value="Genomic_DNA"/>
</dbReference>
<dbReference type="RefSeq" id="WP_010916027.1">
    <property type="nucleotide sequence ID" value="NC_002679.1"/>
</dbReference>
<dbReference type="SMR" id="Q982F2"/>
<dbReference type="KEGG" id="mlo:mll9104"/>
<dbReference type="PATRIC" id="fig|266835.9.peg.6929"/>
<dbReference type="HOGENOM" id="CLU_047382_0_0_5"/>
<dbReference type="UniPathway" id="UPA00253">
    <property type="reaction ID" value="UER00327"/>
</dbReference>
<dbReference type="Proteomes" id="UP000000552">
    <property type="component" value="Plasmid pMLa"/>
</dbReference>
<dbReference type="GO" id="GO:0005829">
    <property type="term" value="C:cytosol"/>
    <property type="evidence" value="ECO:0007669"/>
    <property type="project" value="TreeGrafter"/>
</dbReference>
<dbReference type="GO" id="GO:0051539">
    <property type="term" value="F:4 iron, 4 sulfur cluster binding"/>
    <property type="evidence" value="ECO:0007669"/>
    <property type="project" value="UniProtKB-KW"/>
</dbReference>
<dbReference type="GO" id="GO:0046872">
    <property type="term" value="F:metal ion binding"/>
    <property type="evidence" value="ECO:0007669"/>
    <property type="project" value="UniProtKB-KW"/>
</dbReference>
<dbReference type="GO" id="GO:0008987">
    <property type="term" value="F:quinolinate synthetase A activity"/>
    <property type="evidence" value="ECO:0007669"/>
    <property type="project" value="UniProtKB-UniRule"/>
</dbReference>
<dbReference type="GO" id="GO:0034628">
    <property type="term" value="P:'de novo' NAD biosynthetic process from L-aspartate"/>
    <property type="evidence" value="ECO:0007669"/>
    <property type="project" value="TreeGrafter"/>
</dbReference>
<dbReference type="Gene3D" id="3.40.50.10800">
    <property type="entry name" value="NadA-like"/>
    <property type="match status" value="3"/>
</dbReference>
<dbReference type="HAMAP" id="MF_00568">
    <property type="entry name" value="NadA_type2"/>
    <property type="match status" value="1"/>
</dbReference>
<dbReference type="InterPro" id="IPR003473">
    <property type="entry name" value="NadA"/>
</dbReference>
<dbReference type="InterPro" id="IPR036094">
    <property type="entry name" value="NadA_sf"/>
</dbReference>
<dbReference type="InterPro" id="IPR023066">
    <property type="entry name" value="Quinolinate_synth_type2"/>
</dbReference>
<dbReference type="NCBIfam" id="TIGR00550">
    <property type="entry name" value="nadA"/>
    <property type="match status" value="1"/>
</dbReference>
<dbReference type="NCBIfam" id="NF006878">
    <property type="entry name" value="PRK09375.1-2"/>
    <property type="match status" value="1"/>
</dbReference>
<dbReference type="NCBIfam" id="NF006879">
    <property type="entry name" value="PRK09375.1-4"/>
    <property type="match status" value="1"/>
</dbReference>
<dbReference type="PANTHER" id="PTHR30573:SF0">
    <property type="entry name" value="QUINOLINATE SYNTHASE, CHLOROPLASTIC"/>
    <property type="match status" value="1"/>
</dbReference>
<dbReference type="PANTHER" id="PTHR30573">
    <property type="entry name" value="QUINOLINATE SYNTHETASE A"/>
    <property type="match status" value="1"/>
</dbReference>
<dbReference type="Pfam" id="PF02445">
    <property type="entry name" value="NadA"/>
    <property type="match status" value="1"/>
</dbReference>
<dbReference type="SUPFAM" id="SSF142754">
    <property type="entry name" value="NadA-like"/>
    <property type="match status" value="1"/>
</dbReference>
<feature type="chain" id="PRO_0000155794" description="Quinolinate synthase 2">
    <location>
        <begin position="1"/>
        <end position="324"/>
    </location>
</feature>
<feature type="binding site" evidence="1">
    <location>
        <position position="48"/>
    </location>
    <ligand>
        <name>iminosuccinate</name>
        <dbReference type="ChEBI" id="CHEBI:77875"/>
    </ligand>
</feature>
<feature type="binding site" evidence="1">
    <location>
        <position position="66"/>
    </location>
    <ligand>
        <name>iminosuccinate</name>
        <dbReference type="ChEBI" id="CHEBI:77875"/>
    </ligand>
</feature>
<feature type="binding site" evidence="1">
    <location>
        <position position="111"/>
    </location>
    <ligand>
        <name>[4Fe-4S] cluster</name>
        <dbReference type="ChEBI" id="CHEBI:49883"/>
    </ligand>
</feature>
<feature type="binding site" evidence="1">
    <location>
        <begin position="137"/>
        <end position="139"/>
    </location>
    <ligand>
        <name>iminosuccinate</name>
        <dbReference type="ChEBI" id="CHEBI:77875"/>
    </ligand>
</feature>
<feature type="binding site" evidence="1">
    <location>
        <position position="154"/>
    </location>
    <ligand>
        <name>iminosuccinate</name>
        <dbReference type="ChEBI" id="CHEBI:77875"/>
    </ligand>
</feature>
<feature type="binding site" evidence="1">
    <location>
        <position position="196"/>
    </location>
    <ligand>
        <name>[4Fe-4S] cluster</name>
        <dbReference type="ChEBI" id="CHEBI:49883"/>
    </ligand>
</feature>
<feature type="binding site" evidence="1">
    <location>
        <begin position="222"/>
        <end position="224"/>
    </location>
    <ligand>
        <name>iminosuccinate</name>
        <dbReference type="ChEBI" id="CHEBI:77875"/>
    </ligand>
</feature>
<feature type="binding site" evidence="1">
    <location>
        <position position="239"/>
    </location>
    <ligand>
        <name>iminosuccinate</name>
        <dbReference type="ChEBI" id="CHEBI:77875"/>
    </ligand>
</feature>
<feature type="binding site" evidence="1">
    <location>
        <position position="282"/>
    </location>
    <ligand>
        <name>[4Fe-4S] cluster</name>
        <dbReference type="ChEBI" id="CHEBI:49883"/>
    </ligand>
</feature>
<keyword id="KW-0004">4Fe-4S</keyword>
<keyword id="KW-0963">Cytoplasm</keyword>
<keyword id="KW-0408">Iron</keyword>
<keyword id="KW-0411">Iron-sulfur</keyword>
<keyword id="KW-0479">Metal-binding</keyword>
<keyword id="KW-0614">Plasmid</keyword>
<keyword id="KW-0662">Pyridine nucleotide biosynthesis</keyword>
<keyword id="KW-0808">Transferase</keyword>
<name>NADA2_RHILO</name>
<reference key="1">
    <citation type="journal article" date="2000" name="DNA Res.">
        <title>Complete genome structure of the nitrogen-fixing symbiotic bacterium Mesorhizobium loti.</title>
        <authorList>
            <person name="Kaneko T."/>
            <person name="Nakamura Y."/>
            <person name="Sato S."/>
            <person name="Asamizu E."/>
            <person name="Kato T."/>
            <person name="Sasamoto S."/>
            <person name="Watanabe A."/>
            <person name="Idesawa K."/>
            <person name="Ishikawa A."/>
            <person name="Kawashima K."/>
            <person name="Kimura T."/>
            <person name="Kishida Y."/>
            <person name="Kiyokawa C."/>
            <person name="Kohara M."/>
            <person name="Matsumoto M."/>
            <person name="Matsuno A."/>
            <person name="Mochizuki Y."/>
            <person name="Nakayama S."/>
            <person name="Nakazaki N."/>
            <person name="Shimpo S."/>
            <person name="Sugimoto M."/>
            <person name="Takeuchi C."/>
            <person name="Yamada M."/>
            <person name="Tabata S."/>
        </authorList>
    </citation>
    <scope>NUCLEOTIDE SEQUENCE [LARGE SCALE GENOMIC DNA]</scope>
    <source>
        <strain>LMG 29417 / CECT 9101 / MAFF 303099</strain>
    </source>
</reference>
<organism>
    <name type="scientific">Mesorhizobium japonicum (strain LMG 29417 / CECT 9101 / MAFF 303099)</name>
    <name type="common">Mesorhizobium loti (strain MAFF 303099)</name>
    <dbReference type="NCBI Taxonomy" id="266835"/>
    <lineage>
        <taxon>Bacteria</taxon>
        <taxon>Pseudomonadati</taxon>
        <taxon>Pseudomonadota</taxon>
        <taxon>Alphaproteobacteria</taxon>
        <taxon>Hyphomicrobiales</taxon>
        <taxon>Phyllobacteriaceae</taxon>
        <taxon>Mesorhizobium</taxon>
    </lineage>
</organism>
<protein>
    <recommendedName>
        <fullName evidence="1">Quinolinate synthase 2</fullName>
        <ecNumber evidence="1">2.5.1.72</ecNumber>
    </recommendedName>
</protein>
<comment type="function">
    <text evidence="1">Catalyzes the condensation of iminoaspartate with dihydroxyacetone phosphate to form quinolinate.</text>
</comment>
<comment type="catalytic activity">
    <reaction evidence="1">
        <text>iminosuccinate + dihydroxyacetone phosphate = quinolinate + phosphate + 2 H2O + H(+)</text>
        <dbReference type="Rhea" id="RHEA:25888"/>
        <dbReference type="ChEBI" id="CHEBI:15377"/>
        <dbReference type="ChEBI" id="CHEBI:15378"/>
        <dbReference type="ChEBI" id="CHEBI:29959"/>
        <dbReference type="ChEBI" id="CHEBI:43474"/>
        <dbReference type="ChEBI" id="CHEBI:57642"/>
        <dbReference type="ChEBI" id="CHEBI:77875"/>
        <dbReference type="EC" id="2.5.1.72"/>
    </reaction>
    <physiologicalReaction direction="left-to-right" evidence="1">
        <dbReference type="Rhea" id="RHEA:25889"/>
    </physiologicalReaction>
</comment>
<comment type="cofactor">
    <cofactor evidence="1">
        <name>[4Fe-4S] cluster</name>
        <dbReference type="ChEBI" id="CHEBI:49883"/>
    </cofactor>
    <text evidence="1">Binds 1 [4Fe-4S] cluster per subunit.</text>
</comment>
<comment type="pathway">
    <text evidence="1">Cofactor biosynthesis; NAD(+) biosynthesis; quinolinate from iminoaspartate: step 1/1.</text>
</comment>
<comment type="subcellular location">
    <subcellularLocation>
        <location evidence="1">Cytoplasm</location>
    </subcellularLocation>
</comment>
<comment type="similarity">
    <text evidence="1">Belongs to the quinolinate synthase family. Type 2 subfamily.</text>
</comment>